<comment type="function">
    <text evidence="1">ATP-dependent RNA helicase involved nonsense-mediated mRNA decay and ribosome biogenesis through rRNA processing.</text>
</comment>
<comment type="catalytic activity">
    <reaction>
        <text>ATP + H2O = ADP + phosphate + H(+)</text>
        <dbReference type="Rhea" id="RHEA:13065"/>
        <dbReference type="ChEBI" id="CHEBI:15377"/>
        <dbReference type="ChEBI" id="CHEBI:15378"/>
        <dbReference type="ChEBI" id="CHEBI:30616"/>
        <dbReference type="ChEBI" id="CHEBI:43474"/>
        <dbReference type="ChEBI" id="CHEBI:456216"/>
        <dbReference type="EC" id="3.6.4.13"/>
    </reaction>
</comment>
<comment type="subcellular location">
    <subcellularLocation>
        <location evidence="1">Nucleus</location>
    </subcellularLocation>
</comment>
<comment type="domain">
    <text>The Q motif is unique to and characteristic of the DEAD box family of RNA helicases and controls ATP binding and hydrolysis.</text>
</comment>
<comment type="similarity">
    <text evidence="5">Belongs to the DEAD box helicase family. DDX5/DBP2 subfamily.</text>
</comment>
<comment type="sequence caution" evidence="5">
    <conflict type="erroneous gene model prediction">
        <sequence resource="EMBL-CDS" id="BAD73320"/>
    </conflict>
</comment>
<comment type="sequence caution" evidence="5">
    <conflict type="erroneous gene model prediction">
        <sequence resource="EMBL-CDS" id="BAF04212"/>
    </conflict>
</comment>
<gene>
    <name type="ordered locus">Os01g0197200</name>
    <name type="ordered locus">LOC_Os01g10050</name>
    <name type="ORF">P0419B01.12</name>
</gene>
<organism>
    <name type="scientific">Oryza sativa subsp. japonica</name>
    <name type="common">Rice</name>
    <dbReference type="NCBI Taxonomy" id="39947"/>
    <lineage>
        <taxon>Eukaryota</taxon>
        <taxon>Viridiplantae</taxon>
        <taxon>Streptophyta</taxon>
        <taxon>Embryophyta</taxon>
        <taxon>Tracheophyta</taxon>
        <taxon>Spermatophyta</taxon>
        <taxon>Magnoliopsida</taxon>
        <taxon>Liliopsida</taxon>
        <taxon>Poales</taxon>
        <taxon>Poaceae</taxon>
        <taxon>BOP clade</taxon>
        <taxon>Oryzoideae</taxon>
        <taxon>Oryzeae</taxon>
        <taxon>Oryzinae</taxon>
        <taxon>Oryza</taxon>
        <taxon>Oryza sativa</taxon>
    </lineage>
</organism>
<reference key="1">
    <citation type="journal article" date="2002" name="Nature">
        <title>The genome sequence and structure of rice chromosome 1.</title>
        <authorList>
            <person name="Sasaki T."/>
            <person name="Matsumoto T."/>
            <person name="Yamamoto K."/>
            <person name="Sakata K."/>
            <person name="Baba T."/>
            <person name="Katayose Y."/>
            <person name="Wu J."/>
            <person name="Niimura Y."/>
            <person name="Cheng Z."/>
            <person name="Nagamura Y."/>
            <person name="Antonio B.A."/>
            <person name="Kanamori H."/>
            <person name="Hosokawa S."/>
            <person name="Masukawa M."/>
            <person name="Arikawa K."/>
            <person name="Chiden Y."/>
            <person name="Hayashi M."/>
            <person name="Okamoto M."/>
            <person name="Ando T."/>
            <person name="Aoki H."/>
            <person name="Arita K."/>
            <person name="Hamada M."/>
            <person name="Harada C."/>
            <person name="Hijishita S."/>
            <person name="Honda M."/>
            <person name="Ichikawa Y."/>
            <person name="Idonuma A."/>
            <person name="Iijima M."/>
            <person name="Ikeda M."/>
            <person name="Ikeno M."/>
            <person name="Ito S."/>
            <person name="Ito T."/>
            <person name="Ito Y."/>
            <person name="Ito Y."/>
            <person name="Iwabuchi A."/>
            <person name="Kamiya K."/>
            <person name="Karasawa W."/>
            <person name="Katagiri S."/>
            <person name="Kikuta A."/>
            <person name="Kobayashi N."/>
            <person name="Kono I."/>
            <person name="Machita K."/>
            <person name="Maehara T."/>
            <person name="Mizuno H."/>
            <person name="Mizubayashi T."/>
            <person name="Mukai Y."/>
            <person name="Nagasaki H."/>
            <person name="Nakashima M."/>
            <person name="Nakama Y."/>
            <person name="Nakamichi Y."/>
            <person name="Nakamura M."/>
            <person name="Namiki N."/>
            <person name="Negishi M."/>
            <person name="Ohta I."/>
            <person name="Ono N."/>
            <person name="Saji S."/>
            <person name="Sakai K."/>
            <person name="Shibata M."/>
            <person name="Shimokawa T."/>
            <person name="Shomura A."/>
            <person name="Song J."/>
            <person name="Takazaki Y."/>
            <person name="Terasawa K."/>
            <person name="Tsuji K."/>
            <person name="Waki K."/>
            <person name="Yamagata H."/>
            <person name="Yamane H."/>
            <person name="Yoshiki S."/>
            <person name="Yoshihara R."/>
            <person name="Yukawa K."/>
            <person name="Zhong H."/>
            <person name="Iwama H."/>
            <person name="Endo T."/>
            <person name="Ito H."/>
            <person name="Hahn J.H."/>
            <person name="Kim H.-I."/>
            <person name="Eun M.-Y."/>
            <person name="Yano M."/>
            <person name="Jiang J."/>
            <person name="Gojobori T."/>
        </authorList>
    </citation>
    <scope>NUCLEOTIDE SEQUENCE [LARGE SCALE GENOMIC DNA]</scope>
    <source>
        <strain>cv. Nipponbare</strain>
    </source>
</reference>
<reference key="2">
    <citation type="journal article" date="2005" name="Nature">
        <title>The map-based sequence of the rice genome.</title>
        <authorList>
            <consortium name="International rice genome sequencing project (IRGSP)"/>
        </authorList>
    </citation>
    <scope>NUCLEOTIDE SEQUENCE [LARGE SCALE GENOMIC DNA]</scope>
    <source>
        <strain>cv. Nipponbare</strain>
    </source>
</reference>
<reference key="3">
    <citation type="journal article" date="2008" name="Nucleic Acids Res.">
        <title>The rice annotation project database (RAP-DB): 2008 update.</title>
        <authorList>
            <consortium name="The rice annotation project (RAP)"/>
        </authorList>
    </citation>
    <scope>GENOME REANNOTATION</scope>
    <source>
        <strain>cv. Nipponbare</strain>
    </source>
</reference>
<reference key="4">
    <citation type="journal article" date="2013" name="Rice">
        <title>Improvement of the Oryza sativa Nipponbare reference genome using next generation sequence and optical map data.</title>
        <authorList>
            <person name="Kawahara Y."/>
            <person name="de la Bastide M."/>
            <person name="Hamilton J.P."/>
            <person name="Kanamori H."/>
            <person name="McCombie W.R."/>
            <person name="Ouyang S."/>
            <person name="Schwartz D.C."/>
            <person name="Tanaka T."/>
            <person name="Wu J."/>
            <person name="Zhou S."/>
            <person name="Childs K.L."/>
            <person name="Davidson R.M."/>
            <person name="Lin H."/>
            <person name="Quesada-Ocampo L."/>
            <person name="Vaillancourt B."/>
            <person name="Sakai H."/>
            <person name="Lee S.S."/>
            <person name="Kim J."/>
            <person name="Numa H."/>
            <person name="Itoh T."/>
            <person name="Buell C.R."/>
            <person name="Matsumoto T."/>
        </authorList>
    </citation>
    <scope>GENOME REANNOTATION</scope>
    <source>
        <strain>cv. Nipponbare</strain>
    </source>
</reference>
<reference key="5">
    <citation type="journal article" date="2005" name="PLoS Biol.">
        <title>The genomes of Oryza sativa: a history of duplications.</title>
        <authorList>
            <person name="Yu J."/>
            <person name="Wang J."/>
            <person name="Lin W."/>
            <person name="Li S."/>
            <person name="Li H."/>
            <person name="Zhou J."/>
            <person name="Ni P."/>
            <person name="Dong W."/>
            <person name="Hu S."/>
            <person name="Zeng C."/>
            <person name="Zhang J."/>
            <person name="Zhang Y."/>
            <person name="Li R."/>
            <person name="Xu Z."/>
            <person name="Li S."/>
            <person name="Li X."/>
            <person name="Zheng H."/>
            <person name="Cong L."/>
            <person name="Lin L."/>
            <person name="Yin J."/>
            <person name="Geng J."/>
            <person name="Li G."/>
            <person name="Shi J."/>
            <person name="Liu J."/>
            <person name="Lv H."/>
            <person name="Li J."/>
            <person name="Wang J."/>
            <person name="Deng Y."/>
            <person name="Ran L."/>
            <person name="Shi X."/>
            <person name="Wang X."/>
            <person name="Wu Q."/>
            <person name="Li C."/>
            <person name="Ren X."/>
            <person name="Wang J."/>
            <person name="Wang X."/>
            <person name="Li D."/>
            <person name="Liu D."/>
            <person name="Zhang X."/>
            <person name="Ji Z."/>
            <person name="Zhao W."/>
            <person name="Sun Y."/>
            <person name="Zhang Z."/>
            <person name="Bao J."/>
            <person name="Han Y."/>
            <person name="Dong L."/>
            <person name="Ji J."/>
            <person name="Chen P."/>
            <person name="Wu S."/>
            <person name="Liu J."/>
            <person name="Xiao Y."/>
            <person name="Bu D."/>
            <person name="Tan J."/>
            <person name="Yang L."/>
            <person name="Ye C."/>
            <person name="Zhang J."/>
            <person name="Xu J."/>
            <person name="Zhou Y."/>
            <person name="Yu Y."/>
            <person name="Zhang B."/>
            <person name="Zhuang S."/>
            <person name="Wei H."/>
            <person name="Liu B."/>
            <person name="Lei M."/>
            <person name="Yu H."/>
            <person name="Li Y."/>
            <person name="Xu H."/>
            <person name="Wei S."/>
            <person name="He X."/>
            <person name="Fang L."/>
            <person name="Zhang Z."/>
            <person name="Zhang Y."/>
            <person name="Huang X."/>
            <person name="Su Z."/>
            <person name="Tong W."/>
            <person name="Li J."/>
            <person name="Tong Z."/>
            <person name="Li S."/>
            <person name="Ye J."/>
            <person name="Wang L."/>
            <person name="Fang L."/>
            <person name="Lei T."/>
            <person name="Chen C.-S."/>
            <person name="Chen H.-C."/>
            <person name="Xu Z."/>
            <person name="Li H."/>
            <person name="Huang H."/>
            <person name="Zhang F."/>
            <person name="Xu H."/>
            <person name="Li N."/>
            <person name="Zhao C."/>
            <person name="Li S."/>
            <person name="Dong L."/>
            <person name="Huang Y."/>
            <person name="Li L."/>
            <person name="Xi Y."/>
            <person name="Qi Q."/>
            <person name="Li W."/>
            <person name="Zhang B."/>
            <person name="Hu W."/>
            <person name="Zhang Y."/>
            <person name="Tian X."/>
            <person name="Jiao Y."/>
            <person name="Liang X."/>
            <person name="Jin J."/>
            <person name="Gao L."/>
            <person name="Zheng W."/>
            <person name="Hao B."/>
            <person name="Liu S.-M."/>
            <person name="Wang W."/>
            <person name="Yuan L."/>
            <person name="Cao M."/>
            <person name="McDermott J."/>
            <person name="Samudrala R."/>
            <person name="Wang J."/>
            <person name="Wong G.K.-S."/>
            <person name="Yang H."/>
        </authorList>
    </citation>
    <scope>NUCLEOTIDE SEQUENCE [LARGE SCALE GENOMIC DNA]</scope>
    <source>
        <strain>cv. Nipponbare</strain>
    </source>
</reference>
<dbReference type="EC" id="3.6.4.13"/>
<dbReference type="EMBL" id="AP003244">
    <property type="protein sequence ID" value="BAD73320.1"/>
    <property type="status" value="ALT_SEQ"/>
    <property type="molecule type" value="Genomic_DNA"/>
</dbReference>
<dbReference type="EMBL" id="AP008207">
    <property type="protein sequence ID" value="BAF04212.1"/>
    <property type="status" value="ALT_SEQ"/>
    <property type="molecule type" value="Genomic_DNA"/>
</dbReference>
<dbReference type="EMBL" id="AP014957">
    <property type="protein sequence ID" value="BAS70871.1"/>
    <property type="molecule type" value="Genomic_DNA"/>
</dbReference>
<dbReference type="EMBL" id="CM000138">
    <property type="status" value="NOT_ANNOTATED_CDS"/>
    <property type="molecule type" value="Genomic_DNA"/>
</dbReference>
<dbReference type="RefSeq" id="XP_015611419.1">
    <property type="nucleotide sequence ID" value="XM_015755933.1"/>
</dbReference>
<dbReference type="SMR" id="Q5QMN3"/>
<dbReference type="FunCoup" id="Q5QMN3">
    <property type="interactions" value="2939"/>
</dbReference>
<dbReference type="STRING" id="39947.Q5QMN3"/>
<dbReference type="PaxDb" id="39947-Q5QMN3"/>
<dbReference type="EnsemblPlants" id="Os01t0197200-01">
    <property type="protein sequence ID" value="Os01t0197200-01"/>
    <property type="gene ID" value="Os01g0197200"/>
</dbReference>
<dbReference type="Gramene" id="Os01t0197200-01">
    <property type="protein sequence ID" value="Os01t0197200-01"/>
    <property type="gene ID" value="Os01g0197200"/>
</dbReference>
<dbReference type="eggNOG" id="KOG0331">
    <property type="taxonomic scope" value="Eukaryota"/>
</dbReference>
<dbReference type="HOGENOM" id="CLU_003041_16_9_1"/>
<dbReference type="InParanoid" id="Q5QMN3"/>
<dbReference type="OMA" id="STMPKFE"/>
<dbReference type="OrthoDB" id="196131at2759"/>
<dbReference type="Proteomes" id="UP000000763">
    <property type="component" value="Chromosome 1"/>
</dbReference>
<dbReference type="Proteomes" id="UP000007752">
    <property type="component" value="Chromosome 1"/>
</dbReference>
<dbReference type="Proteomes" id="UP000059680">
    <property type="component" value="Chromosome 1"/>
</dbReference>
<dbReference type="GO" id="GO:0005737">
    <property type="term" value="C:cytoplasm"/>
    <property type="evidence" value="ECO:0000318"/>
    <property type="project" value="GO_Central"/>
</dbReference>
<dbReference type="GO" id="GO:0005634">
    <property type="term" value="C:nucleus"/>
    <property type="evidence" value="ECO:0000318"/>
    <property type="project" value="GO_Central"/>
</dbReference>
<dbReference type="GO" id="GO:1990904">
    <property type="term" value="C:ribonucleoprotein complex"/>
    <property type="evidence" value="ECO:0000318"/>
    <property type="project" value="GO_Central"/>
</dbReference>
<dbReference type="GO" id="GO:0005524">
    <property type="term" value="F:ATP binding"/>
    <property type="evidence" value="ECO:0007669"/>
    <property type="project" value="UniProtKB-KW"/>
</dbReference>
<dbReference type="GO" id="GO:0016887">
    <property type="term" value="F:ATP hydrolysis activity"/>
    <property type="evidence" value="ECO:0007669"/>
    <property type="project" value="RHEA"/>
</dbReference>
<dbReference type="GO" id="GO:0003729">
    <property type="term" value="F:mRNA binding"/>
    <property type="evidence" value="ECO:0000318"/>
    <property type="project" value="GO_Central"/>
</dbReference>
<dbReference type="GO" id="GO:0003724">
    <property type="term" value="F:RNA helicase activity"/>
    <property type="evidence" value="ECO:0000318"/>
    <property type="project" value="GO_Central"/>
</dbReference>
<dbReference type="GO" id="GO:0000184">
    <property type="term" value="P:nuclear-transcribed mRNA catabolic process, nonsense-mediated decay"/>
    <property type="evidence" value="ECO:0007669"/>
    <property type="project" value="UniProtKB-KW"/>
</dbReference>
<dbReference type="GO" id="GO:0006364">
    <property type="term" value="P:rRNA processing"/>
    <property type="evidence" value="ECO:0007669"/>
    <property type="project" value="UniProtKB-KW"/>
</dbReference>
<dbReference type="CDD" id="cd17966">
    <property type="entry name" value="DEADc_DDX5_DDX17"/>
    <property type="match status" value="1"/>
</dbReference>
<dbReference type="CDD" id="cd18787">
    <property type="entry name" value="SF2_C_DEAD"/>
    <property type="match status" value="1"/>
</dbReference>
<dbReference type="FunFam" id="3.40.50.300:FF:000008">
    <property type="entry name" value="ATP-dependent RNA helicase RhlB"/>
    <property type="match status" value="1"/>
</dbReference>
<dbReference type="FunFam" id="3.40.50.300:FF:000079">
    <property type="entry name" value="probable ATP-dependent RNA helicase DDX17"/>
    <property type="match status" value="1"/>
</dbReference>
<dbReference type="Gene3D" id="3.40.50.300">
    <property type="entry name" value="P-loop containing nucleotide triphosphate hydrolases"/>
    <property type="match status" value="2"/>
</dbReference>
<dbReference type="InterPro" id="IPR011545">
    <property type="entry name" value="DEAD/DEAH_box_helicase_dom"/>
</dbReference>
<dbReference type="InterPro" id="IPR014001">
    <property type="entry name" value="Helicase_ATP-bd"/>
</dbReference>
<dbReference type="InterPro" id="IPR001650">
    <property type="entry name" value="Helicase_C-like"/>
</dbReference>
<dbReference type="InterPro" id="IPR027417">
    <property type="entry name" value="P-loop_NTPase"/>
</dbReference>
<dbReference type="InterPro" id="IPR000629">
    <property type="entry name" value="RNA-helicase_DEAD-box_CS"/>
</dbReference>
<dbReference type="InterPro" id="IPR014014">
    <property type="entry name" value="RNA_helicase_DEAD_Q_motif"/>
</dbReference>
<dbReference type="PANTHER" id="PTHR47958">
    <property type="entry name" value="ATP-DEPENDENT RNA HELICASE DBP3"/>
    <property type="match status" value="1"/>
</dbReference>
<dbReference type="Pfam" id="PF00270">
    <property type="entry name" value="DEAD"/>
    <property type="match status" value="1"/>
</dbReference>
<dbReference type="Pfam" id="PF00271">
    <property type="entry name" value="Helicase_C"/>
    <property type="match status" value="1"/>
</dbReference>
<dbReference type="SMART" id="SM00487">
    <property type="entry name" value="DEXDc"/>
    <property type="match status" value="1"/>
</dbReference>
<dbReference type="SMART" id="SM00490">
    <property type="entry name" value="HELICc"/>
    <property type="match status" value="1"/>
</dbReference>
<dbReference type="SUPFAM" id="SSF52540">
    <property type="entry name" value="P-loop containing nucleoside triphosphate hydrolases"/>
    <property type="match status" value="1"/>
</dbReference>
<dbReference type="PROSITE" id="PS00039">
    <property type="entry name" value="DEAD_ATP_HELICASE"/>
    <property type="match status" value="1"/>
</dbReference>
<dbReference type="PROSITE" id="PS51192">
    <property type="entry name" value="HELICASE_ATP_BIND_1"/>
    <property type="match status" value="1"/>
</dbReference>
<dbReference type="PROSITE" id="PS51194">
    <property type="entry name" value="HELICASE_CTER"/>
    <property type="match status" value="1"/>
</dbReference>
<dbReference type="PROSITE" id="PS51195">
    <property type="entry name" value="Q_MOTIF"/>
    <property type="match status" value="1"/>
</dbReference>
<sequence length="494" mass="54674">MSRFDGRAADPGSYRDRRSEGAFGGGTRAFAPTSKADSAAAAADLDGLPRFEKNFYVESPSVAGMTEEEVEAYRRRREITVEGRDVPKPVREFRDVGFPEYVLQEITKAGFVEPTPIQSQGWPMALRGRDLIGIAETGSGKTLAYLLPAIVHVNAQPILAPGDGPIVLVLAPTRELAVQIQQEATKFGASSKIKSTCIYGGVPKGPQVRDLQKGVEIVIATPGRLIDMIESHHTNLRRVTYLVLDEADRMLDMGFEPQIKKIVSQIRPDRQTLYWSATWPKEVEQLARNFLFDPYKVIIGSEELKANHAISQHVEILSESQKYNKLVNLLEDIMDGSRILIFMDTKKGCDQITRQLRMDGWPALSIHGDKSQAERDWVLSEFKSGKSPIMTATDVAARGLDVKDVKYVINYDFPGSLEDYVHRIGRTGRAGAKGTAYTFFTAANARFAKDLINILEEAGQKVSPELANMGRGAPPPSSGHRDRYRGYGGGRSWS</sequence>
<evidence type="ECO:0000250" key="1"/>
<evidence type="ECO:0000255" key="2">
    <source>
        <dbReference type="PROSITE-ProRule" id="PRU00541"/>
    </source>
</evidence>
<evidence type="ECO:0000255" key="3">
    <source>
        <dbReference type="PROSITE-ProRule" id="PRU00542"/>
    </source>
</evidence>
<evidence type="ECO:0000256" key="4">
    <source>
        <dbReference type="SAM" id="MobiDB-lite"/>
    </source>
</evidence>
<evidence type="ECO:0000305" key="5"/>
<protein>
    <recommendedName>
        <fullName>DEAD-box ATP-dependent RNA helicase 20</fullName>
        <ecNumber>3.6.4.13</ecNumber>
    </recommendedName>
</protein>
<accession>Q5QMN3</accession>
<accession>A0A0P0UZY0</accession>
<feature type="chain" id="PRO_0000282455" description="DEAD-box ATP-dependent RNA helicase 20">
    <location>
        <begin position="1"/>
        <end position="494"/>
    </location>
</feature>
<feature type="domain" description="Helicase ATP-binding" evidence="2">
    <location>
        <begin position="122"/>
        <end position="297"/>
    </location>
</feature>
<feature type="domain" description="Helicase C-terminal" evidence="3">
    <location>
        <begin position="325"/>
        <end position="470"/>
    </location>
</feature>
<feature type="region of interest" description="Disordered" evidence="4">
    <location>
        <begin position="1"/>
        <end position="39"/>
    </location>
</feature>
<feature type="region of interest" description="Disordered" evidence="4">
    <location>
        <begin position="465"/>
        <end position="494"/>
    </location>
</feature>
<feature type="short sequence motif" description="Q motif">
    <location>
        <begin position="91"/>
        <end position="119"/>
    </location>
</feature>
<feature type="short sequence motif" description="DEAD box">
    <location>
        <begin position="245"/>
        <end position="248"/>
    </location>
</feature>
<feature type="compositionally biased region" description="Basic and acidic residues" evidence="4">
    <location>
        <begin position="1"/>
        <end position="20"/>
    </location>
</feature>
<feature type="compositionally biased region" description="Low complexity" evidence="4">
    <location>
        <begin position="29"/>
        <end position="39"/>
    </location>
</feature>
<feature type="binding site" evidence="2">
    <location>
        <begin position="135"/>
        <end position="142"/>
    </location>
    <ligand>
        <name>ATP</name>
        <dbReference type="ChEBI" id="CHEBI:30616"/>
    </ligand>
</feature>
<proteinExistence type="inferred from homology"/>
<keyword id="KW-0067">ATP-binding</keyword>
<keyword id="KW-0347">Helicase</keyword>
<keyword id="KW-0378">Hydrolase</keyword>
<keyword id="KW-0866">Nonsense-mediated mRNA decay</keyword>
<keyword id="KW-0547">Nucleotide-binding</keyword>
<keyword id="KW-0539">Nucleus</keyword>
<keyword id="KW-1185">Reference proteome</keyword>
<keyword id="KW-0690">Ribosome biogenesis</keyword>
<keyword id="KW-0694">RNA-binding</keyword>
<keyword id="KW-0698">rRNA processing</keyword>
<name>RH20_ORYSJ</name>